<sequence>MSKVVHTSGKRKTAIARGTVKEGTGRVKVNRKPVELYEPELARLKIFEPLELAGDIVNSVDINVRVVGGGIMGQAEAARMVIAKGLVEYTGDMNLKDRYVQYDRTMLVGDPRRSESKKFGGPGARARKQKSYR</sequence>
<dbReference type="EMBL" id="CP000102">
    <property type="protein sequence ID" value="ABC57254.1"/>
    <property type="molecule type" value="Genomic_DNA"/>
</dbReference>
<dbReference type="RefSeq" id="WP_011406453.1">
    <property type="nucleotide sequence ID" value="NC_007681.1"/>
</dbReference>
<dbReference type="SMR" id="Q2NFZ9"/>
<dbReference type="STRING" id="339860.Msp_0865"/>
<dbReference type="KEGG" id="mst:Msp_0865"/>
<dbReference type="eggNOG" id="arCOG04243">
    <property type="taxonomic scope" value="Archaea"/>
</dbReference>
<dbReference type="HOGENOM" id="CLU_046483_4_0_2"/>
<dbReference type="OrthoDB" id="52677at2157"/>
<dbReference type="Proteomes" id="UP000001931">
    <property type="component" value="Chromosome"/>
</dbReference>
<dbReference type="GO" id="GO:0022627">
    <property type="term" value="C:cytosolic small ribosomal subunit"/>
    <property type="evidence" value="ECO:0007669"/>
    <property type="project" value="TreeGrafter"/>
</dbReference>
<dbReference type="GO" id="GO:0003723">
    <property type="term" value="F:RNA binding"/>
    <property type="evidence" value="ECO:0007669"/>
    <property type="project" value="TreeGrafter"/>
</dbReference>
<dbReference type="GO" id="GO:0003735">
    <property type="term" value="F:structural constituent of ribosome"/>
    <property type="evidence" value="ECO:0007669"/>
    <property type="project" value="InterPro"/>
</dbReference>
<dbReference type="GO" id="GO:0000462">
    <property type="term" value="P:maturation of SSU-rRNA from tricistronic rRNA transcript (SSU-rRNA, 5.8S rRNA, LSU-rRNA)"/>
    <property type="evidence" value="ECO:0007669"/>
    <property type="project" value="TreeGrafter"/>
</dbReference>
<dbReference type="GO" id="GO:0006412">
    <property type="term" value="P:translation"/>
    <property type="evidence" value="ECO:0007669"/>
    <property type="project" value="UniProtKB-UniRule"/>
</dbReference>
<dbReference type="FunFam" id="3.30.230.10:FF:000051">
    <property type="entry name" value="30S ribosomal protein S9"/>
    <property type="match status" value="1"/>
</dbReference>
<dbReference type="Gene3D" id="3.30.230.10">
    <property type="match status" value="1"/>
</dbReference>
<dbReference type="HAMAP" id="MF_00532_A">
    <property type="entry name" value="Ribosomal_uS9_A"/>
    <property type="match status" value="1"/>
</dbReference>
<dbReference type="InterPro" id="IPR020568">
    <property type="entry name" value="Ribosomal_Su5_D2-typ_SF"/>
</dbReference>
<dbReference type="InterPro" id="IPR000754">
    <property type="entry name" value="Ribosomal_uS9"/>
</dbReference>
<dbReference type="InterPro" id="IPR019958">
    <property type="entry name" value="Ribosomal_uS9_archaeal"/>
</dbReference>
<dbReference type="InterPro" id="IPR014721">
    <property type="entry name" value="Ribsml_uS5_D2-typ_fold_subgr"/>
</dbReference>
<dbReference type="NCBIfam" id="NF001749">
    <property type="entry name" value="PRK00474.1"/>
    <property type="match status" value="1"/>
</dbReference>
<dbReference type="NCBIfam" id="TIGR03627">
    <property type="entry name" value="uS9_arch"/>
    <property type="match status" value="1"/>
</dbReference>
<dbReference type="PANTHER" id="PTHR21569:SF16">
    <property type="entry name" value="RIBOSOMAL PROTEIN S16"/>
    <property type="match status" value="1"/>
</dbReference>
<dbReference type="PANTHER" id="PTHR21569">
    <property type="entry name" value="RIBOSOMAL PROTEIN S9"/>
    <property type="match status" value="1"/>
</dbReference>
<dbReference type="Pfam" id="PF00380">
    <property type="entry name" value="Ribosomal_S9"/>
    <property type="match status" value="1"/>
</dbReference>
<dbReference type="SUPFAM" id="SSF54211">
    <property type="entry name" value="Ribosomal protein S5 domain 2-like"/>
    <property type="match status" value="1"/>
</dbReference>
<name>RS9_METST</name>
<reference key="1">
    <citation type="journal article" date="2006" name="J. Bacteriol.">
        <title>The genome sequence of Methanosphaera stadtmanae reveals why this human intestinal archaeon is restricted to methanol and H2 for methane formation and ATP synthesis.</title>
        <authorList>
            <person name="Fricke W.F."/>
            <person name="Seedorf H."/>
            <person name="Henne A."/>
            <person name="Kruer M."/>
            <person name="Liesegang H."/>
            <person name="Hedderich R."/>
            <person name="Gottschalk G."/>
            <person name="Thauer R.K."/>
        </authorList>
    </citation>
    <scope>NUCLEOTIDE SEQUENCE [LARGE SCALE GENOMIC DNA]</scope>
    <source>
        <strain>ATCC 43021 / DSM 3091 / JCM 11832 / MCB-3</strain>
    </source>
</reference>
<proteinExistence type="inferred from homology"/>
<comment type="similarity">
    <text evidence="1">Belongs to the universal ribosomal protein uS9 family.</text>
</comment>
<evidence type="ECO:0000255" key="1">
    <source>
        <dbReference type="HAMAP-Rule" id="MF_00532"/>
    </source>
</evidence>
<evidence type="ECO:0000256" key="2">
    <source>
        <dbReference type="SAM" id="MobiDB-lite"/>
    </source>
</evidence>
<evidence type="ECO:0000305" key="3"/>
<organism>
    <name type="scientific">Methanosphaera stadtmanae (strain ATCC 43021 / DSM 3091 / JCM 11832 / MCB-3)</name>
    <dbReference type="NCBI Taxonomy" id="339860"/>
    <lineage>
        <taxon>Archaea</taxon>
        <taxon>Methanobacteriati</taxon>
        <taxon>Methanobacteriota</taxon>
        <taxon>Methanomada group</taxon>
        <taxon>Methanobacteria</taxon>
        <taxon>Methanobacteriales</taxon>
        <taxon>Methanobacteriaceae</taxon>
        <taxon>Methanosphaera</taxon>
    </lineage>
</organism>
<protein>
    <recommendedName>
        <fullName evidence="1">Small ribosomal subunit protein uS9</fullName>
    </recommendedName>
    <alternativeName>
        <fullName evidence="3">30S ribosomal protein S9</fullName>
    </alternativeName>
</protein>
<feature type="chain" id="PRO_1000051253" description="Small ribosomal subunit protein uS9">
    <location>
        <begin position="1"/>
        <end position="133"/>
    </location>
</feature>
<feature type="region of interest" description="Disordered" evidence="2">
    <location>
        <begin position="111"/>
        <end position="133"/>
    </location>
</feature>
<accession>Q2NFZ9</accession>
<keyword id="KW-1185">Reference proteome</keyword>
<keyword id="KW-0687">Ribonucleoprotein</keyword>
<keyword id="KW-0689">Ribosomal protein</keyword>
<gene>
    <name evidence="1" type="primary">rps9</name>
    <name type="ordered locus">Msp_0865</name>
</gene>